<dbReference type="EMBL" id="U28369">
    <property type="protein sequence ID" value="AAD09138.1"/>
    <property type="molecule type" value="mRNA"/>
</dbReference>
<dbReference type="EMBL" id="AB083186">
    <property type="protein sequence ID" value="BAB88870.1"/>
    <property type="molecule type" value="mRNA"/>
</dbReference>
<dbReference type="EMBL" id="U73167">
    <property type="protein sequence ID" value="AAC02731.1"/>
    <property type="status" value="ALT_SEQ"/>
    <property type="molecule type" value="Genomic_DNA"/>
</dbReference>
<dbReference type="EMBL" id="BC009113">
    <property type="protein sequence ID" value="AAH09113.1"/>
    <property type="molecule type" value="mRNA"/>
</dbReference>
<dbReference type="EMBL" id="BC013975">
    <property type="protein sequence ID" value="AAH13975.1"/>
    <property type="molecule type" value="mRNA"/>
</dbReference>
<dbReference type="EMBL" id="BC024220">
    <property type="protein sequence ID" value="AAH24220.1"/>
    <property type="molecule type" value="mRNA"/>
</dbReference>
<dbReference type="CCDS" id="CCDS74941.1">
    <molecule id="Q13214-1"/>
</dbReference>
<dbReference type="CCDS" id="CCDS77744.1">
    <molecule id="Q13214-2"/>
</dbReference>
<dbReference type="PIR" id="G01856">
    <property type="entry name" value="G01856"/>
</dbReference>
<dbReference type="RefSeq" id="NP_001005914.1">
    <molecule id="Q13214-2"/>
    <property type="nucleotide sequence ID" value="NM_001005914.3"/>
</dbReference>
<dbReference type="RefSeq" id="NP_001276989.1">
    <molecule id="Q13214-1"/>
    <property type="nucleotide sequence ID" value="NM_001290060.2"/>
</dbReference>
<dbReference type="RefSeq" id="NP_001276990.1">
    <property type="nucleotide sequence ID" value="NM_001290061.1"/>
</dbReference>
<dbReference type="RefSeq" id="NP_001276991.1">
    <property type="nucleotide sequence ID" value="NM_001290062.1"/>
</dbReference>
<dbReference type="RefSeq" id="NP_001276992.1">
    <property type="nucleotide sequence ID" value="NM_001290063.1"/>
</dbReference>
<dbReference type="RefSeq" id="NP_001422885.1">
    <molecule id="Q13214-1"/>
    <property type="nucleotide sequence ID" value="NM_001435956.1"/>
</dbReference>
<dbReference type="RefSeq" id="NP_001422886.1">
    <molecule id="Q13214-2"/>
    <property type="nucleotide sequence ID" value="NM_001435957.1"/>
</dbReference>
<dbReference type="RefSeq" id="NP_001422887.1">
    <molecule id="Q13214-2"/>
    <property type="nucleotide sequence ID" value="NM_001435958.1"/>
</dbReference>
<dbReference type="RefSeq" id="NP_004627.1">
    <molecule id="Q13214-1"/>
    <property type="nucleotide sequence ID" value="NM_004636.4"/>
</dbReference>
<dbReference type="SMR" id="Q13214"/>
<dbReference type="BioGRID" id="113618">
    <property type="interactions" value="124"/>
</dbReference>
<dbReference type="FunCoup" id="Q13214">
    <property type="interactions" value="217"/>
</dbReference>
<dbReference type="IntAct" id="Q13214">
    <property type="interactions" value="65"/>
</dbReference>
<dbReference type="STRING" id="9606.ENSP00000480680"/>
<dbReference type="GlyCosmos" id="Q13214">
    <property type="glycosylation" value="3 sites, No reported glycans"/>
</dbReference>
<dbReference type="GlyGen" id="Q13214">
    <property type="glycosylation" value="5 sites, 1 N-linked glycan (2 sites), 1 O-linked glycan (2 sites)"/>
</dbReference>
<dbReference type="iPTMnet" id="Q13214"/>
<dbReference type="PhosphoSitePlus" id="Q13214"/>
<dbReference type="BioMuta" id="SEMA3B"/>
<dbReference type="DMDM" id="8134673"/>
<dbReference type="jPOST" id="Q13214"/>
<dbReference type="MassIVE" id="Q13214"/>
<dbReference type="PaxDb" id="9606-ENSP00000484146"/>
<dbReference type="PeptideAtlas" id="Q13214"/>
<dbReference type="ProteomicsDB" id="59226">
    <molecule id="Q13214-1"/>
</dbReference>
<dbReference type="ProteomicsDB" id="59227">
    <molecule id="Q13214-2"/>
</dbReference>
<dbReference type="Pumba" id="Q13214"/>
<dbReference type="Antibodypedia" id="30821">
    <property type="antibodies" value="142 antibodies from 21 providers"/>
</dbReference>
<dbReference type="DNASU" id="7869"/>
<dbReference type="Ensembl" id="ENST00000433753.4">
    <molecule id="Q13214-2"/>
    <property type="protein sequence ID" value="ENSP00000485281.1"/>
    <property type="gene ID" value="ENSG00000012171.20"/>
</dbReference>
<dbReference type="Ensembl" id="ENST00000616701.5">
    <molecule id="Q13214-1"/>
    <property type="protein sequence ID" value="ENSP00000484146.1"/>
    <property type="gene ID" value="ENSG00000012171.20"/>
</dbReference>
<dbReference type="Ensembl" id="ENST00000618865.4">
    <molecule id="Q13214-1"/>
    <property type="protein sequence ID" value="ENSP00000481957.1"/>
    <property type="gene ID" value="ENSG00000012171.20"/>
</dbReference>
<dbReference type="GeneID" id="7869"/>
<dbReference type="KEGG" id="hsa:7869"/>
<dbReference type="MANE-Select" id="ENST00000616701.5">
    <property type="protein sequence ID" value="ENSP00000484146.1"/>
    <property type="RefSeq nucleotide sequence ID" value="NM_001290060.2"/>
    <property type="RefSeq protein sequence ID" value="NP_001276989.1"/>
</dbReference>
<dbReference type="UCSC" id="uc032rmz.2">
    <molecule id="Q13214-1"/>
    <property type="organism name" value="human"/>
</dbReference>
<dbReference type="AGR" id="HGNC:10724"/>
<dbReference type="CTD" id="7869"/>
<dbReference type="DisGeNET" id="7869"/>
<dbReference type="GeneCards" id="SEMA3B"/>
<dbReference type="HGNC" id="HGNC:10724">
    <property type="gene designation" value="SEMA3B"/>
</dbReference>
<dbReference type="HPA" id="ENSG00000012171">
    <property type="expression patterns" value="Tissue enhanced (adrenal gland, brain)"/>
</dbReference>
<dbReference type="MIM" id="601281">
    <property type="type" value="gene"/>
</dbReference>
<dbReference type="neXtProt" id="NX_Q13214"/>
<dbReference type="OpenTargets" id="ENSG00000012171"/>
<dbReference type="PharmGKB" id="PA35646"/>
<dbReference type="VEuPathDB" id="HostDB:ENSG00000012171"/>
<dbReference type="eggNOG" id="KOG3611">
    <property type="taxonomic scope" value="Eukaryota"/>
</dbReference>
<dbReference type="GeneTree" id="ENSGT00940000157756"/>
<dbReference type="HOGENOM" id="CLU_009051_5_1_1"/>
<dbReference type="InParanoid" id="Q13214"/>
<dbReference type="OrthoDB" id="9988752at2759"/>
<dbReference type="PAN-GO" id="Q13214">
    <property type="GO annotations" value="10 GO annotations based on evolutionary models"/>
</dbReference>
<dbReference type="PhylomeDB" id="Q13214"/>
<dbReference type="PathwayCommons" id="Q13214"/>
<dbReference type="SignaLink" id="Q13214"/>
<dbReference type="SIGNOR" id="Q13214"/>
<dbReference type="BioGRID-ORCS" id="7869">
    <property type="hits" value="3 hits in 266 CRISPR screens"/>
</dbReference>
<dbReference type="ChiTaRS" id="SEMA3B">
    <property type="organism name" value="human"/>
</dbReference>
<dbReference type="GeneWiki" id="SEMA3B"/>
<dbReference type="GenomeRNAi" id="7869"/>
<dbReference type="Pharos" id="Q13214">
    <property type="development level" value="Tbio"/>
</dbReference>
<dbReference type="PRO" id="PR:Q13214"/>
<dbReference type="Proteomes" id="UP000005640">
    <property type="component" value="Chromosome 3"/>
</dbReference>
<dbReference type="RNAct" id="Q13214">
    <property type="molecule type" value="protein"/>
</dbReference>
<dbReference type="Bgee" id="ENSG00000012171">
    <property type="expression patterns" value="Expressed in tibial nerve and 181 other cell types or tissues"/>
</dbReference>
<dbReference type="ExpressionAtlas" id="Q13214">
    <property type="expression patterns" value="baseline and differential"/>
</dbReference>
<dbReference type="GO" id="GO:0062023">
    <property type="term" value="C:collagen-containing extracellular matrix"/>
    <property type="evidence" value="ECO:0007005"/>
    <property type="project" value="BHF-UCL"/>
</dbReference>
<dbReference type="GO" id="GO:0005783">
    <property type="term" value="C:endoplasmic reticulum"/>
    <property type="evidence" value="ECO:0000304"/>
    <property type="project" value="ProtInc"/>
</dbReference>
<dbReference type="GO" id="GO:0005576">
    <property type="term" value="C:extracellular region"/>
    <property type="evidence" value="ECO:0007669"/>
    <property type="project" value="UniProtKB-SubCell"/>
</dbReference>
<dbReference type="GO" id="GO:0005886">
    <property type="term" value="C:plasma membrane"/>
    <property type="evidence" value="ECO:0000318"/>
    <property type="project" value="GO_Central"/>
</dbReference>
<dbReference type="GO" id="GO:0045499">
    <property type="term" value="F:chemorepellent activity"/>
    <property type="evidence" value="ECO:0000318"/>
    <property type="project" value="GO_Central"/>
</dbReference>
<dbReference type="GO" id="GO:0038191">
    <property type="term" value="F:neuropilin binding"/>
    <property type="evidence" value="ECO:0000318"/>
    <property type="project" value="GO_Central"/>
</dbReference>
<dbReference type="GO" id="GO:0030215">
    <property type="term" value="F:semaphorin receptor binding"/>
    <property type="evidence" value="ECO:0000318"/>
    <property type="project" value="GO_Central"/>
</dbReference>
<dbReference type="GO" id="GO:0007411">
    <property type="term" value="P:axon guidance"/>
    <property type="evidence" value="ECO:0000318"/>
    <property type="project" value="GO_Central"/>
</dbReference>
<dbReference type="GO" id="GO:0007267">
    <property type="term" value="P:cell-cell signaling"/>
    <property type="evidence" value="ECO:0000304"/>
    <property type="project" value="ProtInc"/>
</dbReference>
<dbReference type="GO" id="GO:0061643">
    <property type="term" value="P:chemorepulsion of axon"/>
    <property type="evidence" value="ECO:0000304"/>
    <property type="project" value="ARUK-UCL"/>
</dbReference>
<dbReference type="GO" id="GO:0050919">
    <property type="term" value="P:negative chemotaxis"/>
    <property type="evidence" value="ECO:0000318"/>
    <property type="project" value="GO_Central"/>
</dbReference>
<dbReference type="GO" id="GO:0001755">
    <property type="term" value="P:neural crest cell migration"/>
    <property type="evidence" value="ECO:0000318"/>
    <property type="project" value="GO_Central"/>
</dbReference>
<dbReference type="GO" id="GO:0030335">
    <property type="term" value="P:positive regulation of cell migration"/>
    <property type="evidence" value="ECO:0000318"/>
    <property type="project" value="GO_Central"/>
</dbReference>
<dbReference type="GO" id="GO:0071526">
    <property type="term" value="P:semaphorin-plexin signaling pathway"/>
    <property type="evidence" value="ECO:0000318"/>
    <property type="project" value="GO_Central"/>
</dbReference>
<dbReference type="CDD" id="cd11250">
    <property type="entry name" value="Sema_3B"/>
    <property type="match status" value="1"/>
</dbReference>
<dbReference type="FunFam" id="2.130.10.10:FF:000015">
    <property type="entry name" value="Semaphorin 3B"/>
    <property type="match status" value="1"/>
</dbReference>
<dbReference type="FunFam" id="2.60.40.10:FF:000030">
    <property type="entry name" value="Semaphorin 3F like"/>
    <property type="match status" value="1"/>
</dbReference>
<dbReference type="FunFam" id="3.30.1680.10:FF:000008">
    <property type="entry name" value="semaphorin-3B isoform X1"/>
    <property type="match status" value="1"/>
</dbReference>
<dbReference type="Gene3D" id="2.60.40.10">
    <property type="entry name" value="Immunoglobulins"/>
    <property type="match status" value="1"/>
</dbReference>
<dbReference type="Gene3D" id="3.30.1680.10">
    <property type="entry name" value="ligand-binding face of the semaphorins, domain 2"/>
    <property type="match status" value="1"/>
</dbReference>
<dbReference type="Gene3D" id="2.130.10.10">
    <property type="entry name" value="YVTN repeat-like/Quinoprotein amine dehydrogenase"/>
    <property type="match status" value="1"/>
</dbReference>
<dbReference type="InterPro" id="IPR007110">
    <property type="entry name" value="Ig-like_dom"/>
</dbReference>
<dbReference type="InterPro" id="IPR036179">
    <property type="entry name" value="Ig-like_dom_sf"/>
</dbReference>
<dbReference type="InterPro" id="IPR013783">
    <property type="entry name" value="Ig-like_fold"/>
</dbReference>
<dbReference type="InterPro" id="IPR003599">
    <property type="entry name" value="Ig_sub"/>
</dbReference>
<dbReference type="InterPro" id="IPR013151">
    <property type="entry name" value="Immunoglobulin_dom"/>
</dbReference>
<dbReference type="InterPro" id="IPR016201">
    <property type="entry name" value="PSI"/>
</dbReference>
<dbReference type="InterPro" id="IPR001627">
    <property type="entry name" value="Semap_dom"/>
</dbReference>
<dbReference type="InterPro" id="IPR036352">
    <property type="entry name" value="Semap_dom_sf"/>
</dbReference>
<dbReference type="InterPro" id="IPR027231">
    <property type="entry name" value="Semaphorin"/>
</dbReference>
<dbReference type="InterPro" id="IPR015943">
    <property type="entry name" value="WD40/YVTN_repeat-like_dom_sf"/>
</dbReference>
<dbReference type="PANTHER" id="PTHR11036">
    <property type="entry name" value="SEMAPHORIN"/>
    <property type="match status" value="1"/>
</dbReference>
<dbReference type="PANTHER" id="PTHR11036:SF37">
    <property type="entry name" value="SEMAPHORIN-3B"/>
    <property type="match status" value="1"/>
</dbReference>
<dbReference type="Pfam" id="PF00047">
    <property type="entry name" value="ig"/>
    <property type="match status" value="1"/>
</dbReference>
<dbReference type="Pfam" id="PF01403">
    <property type="entry name" value="Sema"/>
    <property type="match status" value="1"/>
</dbReference>
<dbReference type="SMART" id="SM00409">
    <property type="entry name" value="IG"/>
    <property type="match status" value="1"/>
</dbReference>
<dbReference type="SMART" id="SM00423">
    <property type="entry name" value="PSI"/>
    <property type="match status" value="1"/>
</dbReference>
<dbReference type="SMART" id="SM00630">
    <property type="entry name" value="Sema"/>
    <property type="match status" value="1"/>
</dbReference>
<dbReference type="SUPFAM" id="SSF48726">
    <property type="entry name" value="Immunoglobulin"/>
    <property type="match status" value="1"/>
</dbReference>
<dbReference type="SUPFAM" id="SSF103575">
    <property type="entry name" value="Plexin repeat"/>
    <property type="match status" value="1"/>
</dbReference>
<dbReference type="SUPFAM" id="SSF101912">
    <property type="entry name" value="Sema domain"/>
    <property type="match status" value="1"/>
</dbReference>
<dbReference type="PROSITE" id="PS50835">
    <property type="entry name" value="IG_LIKE"/>
    <property type="match status" value="1"/>
</dbReference>
<dbReference type="PROSITE" id="PS51004">
    <property type="entry name" value="SEMA"/>
    <property type="match status" value="1"/>
</dbReference>
<sequence>MGRAGAAAVIPGLALLWAVGLGSAAPSPPRLRLSFQELQAWHGLQTFSLERTCCYQALLVDEERGRLFVGAENHVASLNLDNISKRAKKLAWPAPVEWREECNWAGKDIGTECMNFVKLLHAYNRTHLLACGTGAFHPTCAFVEVGHRAEEPVLRLDPGRIEDGKGKSPYDPRHRAASVLVGEELYSGVAADLMGRDFTIFRSLGQRPSLRTEPHDSRWLNEPKFVKVFWIPESENPDDDKIYFFFRETAVEAAPALGRLSVSRVGQICRNDVGGQRSLVNKWTTFLKARLVCSVPGVEGDTHFDQLQDVFLLSSRDHRTPLLYAVFSTSSSIFQGSAVCVYSMNDVRRAFLGPFAHKEGPMHQWVSYQGRVPYPRPGMCPSKTFGTFSSTKDFPDDVIQFARNHPLMYNSVLPTGGRPLFLQVGANYTFTQIAADRVAAADGHYDVLFIGTDVGTVLKVISVPKGSRPSAEGLLLEELHVFEDSAAVTSMQISSKRHQLYVASRSAVAQIALHRCAAHGRVCTECCLARDPYCAWDGVACTRFQPSAKRRFRRQDVRNGDPSTLCSGDSSRPALLEHKVFGVEGSSAFLECEPRSLQARVEWTFQRAGVTAHTQVLAEERTERTARGLLLRRLRRRDSGVYLCAAVEQGFTQPLRRLSLHVLSATQAERLARAEEAAPAAPPGPKLWYRDFLQLVEPGGGGSANSLRMCRPQPALQSLPLESRRKGRNRRTHAPEPRAERGPRSATHW</sequence>
<feature type="signal peptide" evidence="2">
    <location>
        <begin position="1"/>
        <end position="24"/>
    </location>
</feature>
<feature type="chain" id="PRO_0000032309" description="Semaphorin-3B">
    <location>
        <begin position="25"/>
        <end position="749"/>
    </location>
</feature>
<feature type="domain" description="Sema" evidence="3">
    <location>
        <begin position="30"/>
        <end position="513"/>
    </location>
</feature>
<feature type="domain" description="Ig-like C2-type">
    <location>
        <begin position="573"/>
        <end position="659"/>
    </location>
</feature>
<feature type="region of interest" description="Disordered" evidence="4">
    <location>
        <begin position="702"/>
        <end position="749"/>
    </location>
</feature>
<feature type="compositionally biased region" description="Basic and acidic residues" evidence="4">
    <location>
        <begin position="733"/>
        <end position="743"/>
    </location>
</feature>
<feature type="glycosylation site" description="N-linked (GlcNAc...) asparagine" evidence="2">
    <location>
        <position position="82"/>
    </location>
</feature>
<feature type="glycosylation site" description="N-linked (GlcNAc...) asparagine" evidence="2">
    <location>
        <position position="124"/>
    </location>
</feature>
<feature type="glycosylation site" description="N-linked (GlcNAc...) asparagine" evidence="2">
    <location>
        <position position="427"/>
    </location>
</feature>
<feature type="disulfide bond" evidence="1">
    <location>
        <begin position="102"/>
        <end position="113"/>
    </location>
</feature>
<feature type="disulfide bond" evidence="1">
    <location>
        <begin position="131"/>
        <end position="140"/>
    </location>
</feature>
<feature type="disulfide bond" evidence="1">
    <location>
        <begin position="269"/>
        <end position="380"/>
    </location>
</feature>
<feature type="disulfide bond" evidence="1">
    <location>
        <begin position="293"/>
        <end position="340"/>
    </location>
</feature>
<feature type="disulfide bond" evidence="1">
    <location>
        <begin position="516"/>
        <end position="534"/>
    </location>
</feature>
<feature type="disulfide bond" evidence="1">
    <location>
        <begin position="644"/>
        <end position="710"/>
    </location>
</feature>
<feature type="splice variant" id="VSP_023032" description="In isoform 2." evidence="6">
    <location>
        <position position="332"/>
    </location>
</feature>
<feature type="sequence variant" id="VAR_014221" description="In a non-small cell lung cancer cell line." evidence="5">
    <original>R</original>
    <variation>C</variation>
    <location>
        <position position="348"/>
    </location>
</feature>
<feature type="sequence variant" id="VAR_014222" description="In a non-small cell lung cancer cell line." evidence="5">
    <original>D</original>
    <variation>H</variation>
    <location>
        <position position="397"/>
    </location>
</feature>
<feature type="sequence variant" id="VAR_014223" description="In a non-small cell lung cancer cell line; dbSNP:rs2071203." evidence="5">
    <original>T</original>
    <variation>I</variation>
    <location>
        <position position="415"/>
    </location>
</feature>
<feature type="sequence conflict" description="In Ref. 3; AAC02731." evidence="7" ref="3">
    <original>PRLRLSFQ</original>
    <variation>HAFGSPSKV</variation>
    <location>
        <begin position="29"/>
        <end position="36"/>
    </location>
</feature>
<feature type="sequence conflict" description="In Ref. 2; BAB88870." evidence="7" ref="2">
    <original>Q</original>
    <variation>RPFPAE</variation>
    <location>
        <position position="308"/>
    </location>
</feature>
<organism>
    <name type="scientific">Homo sapiens</name>
    <name type="common">Human</name>
    <dbReference type="NCBI Taxonomy" id="9606"/>
    <lineage>
        <taxon>Eukaryota</taxon>
        <taxon>Metazoa</taxon>
        <taxon>Chordata</taxon>
        <taxon>Craniata</taxon>
        <taxon>Vertebrata</taxon>
        <taxon>Euteleostomi</taxon>
        <taxon>Mammalia</taxon>
        <taxon>Eutheria</taxon>
        <taxon>Euarchontoglires</taxon>
        <taxon>Primates</taxon>
        <taxon>Haplorrhini</taxon>
        <taxon>Catarrhini</taxon>
        <taxon>Hominidae</taxon>
        <taxon>Homo</taxon>
    </lineage>
</organism>
<gene>
    <name type="primary">SEMA3B</name>
    <name type="synonym">SEMA5</name>
    <name type="synonym">SEMAA</name>
</gene>
<accession>Q13214</accession>
<accession>Q6GU46</accession>
<accession>Q8TB71</accession>
<accession>Q8TDV7</accession>
<accession>Q93018</accession>
<accession>Q96GX0</accession>
<proteinExistence type="evidence at protein level"/>
<keyword id="KW-0025">Alternative splicing</keyword>
<keyword id="KW-1015">Disulfide bond</keyword>
<keyword id="KW-0256">Endoplasmic reticulum</keyword>
<keyword id="KW-0325">Glycoprotein</keyword>
<keyword id="KW-0393">Immunoglobulin domain</keyword>
<keyword id="KW-1267">Proteomics identification</keyword>
<keyword id="KW-1185">Reference proteome</keyword>
<keyword id="KW-0964">Secreted</keyword>
<keyword id="KW-0732">Signal</keyword>
<comment type="function">
    <text evidence="1">Inhibits axonal extension by providing local signals to specify territories inaccessible for growing axons.</text>
</comment>
<comment type="interaction">
    <interactant intactId="EBI-11017428">
        <id>Q13214-2</id>
    </interactant>
    <interactant intactId="EBI-11983447">
        <id>Q8N9W6-4</id>
        <label>BOLL</label>
    </interactant>
    <organismsDiffer>false</organismsDiffer>
    <experiments>3</experiments>
</comment>
<comment type="interaction">
    <interactant intactId="EBI-11017428">
        <id>Q13214-2</id>
    </interactant>
    <interactant intactId="EBI-3866279">
        <id>Q9BWT7</id>
        <label>CARD10</label>
    </interactant>
    <organismsDiffer>false</organismsDiffer>
    <experiments>3</experiments>
</comment>
<comment type="interaction">
    <interactant intactId="EBI-11017428">
        <id>Q13214-2</id>
    </interactant>
    <interactant intactId="EBI-3867333">
        <id>A8MQ03</id>
        <label>CYSRT1</label>
    </interactant>
    <organismsDiffer>false</organismsDiffer>
    <experiments>3</experiments>
</comment>
<comment type="interaction">
    <interactant intactId="EBI-11017428">
        <id>Q13214-2</id>
    </interactant>
    <interactant intactId="EBI-7116203">
        <id>O75031</id>
        <label>HSF2BP</label>
    </interactant>
    <organismsDiffer>false</organismsDiffer>
    <experiments>3</experiments>
</comment>
<comment type="interaction">
    <interactant intactId="EBI-11017428">
        <id>Q13214-2</id>
    </interactant>
    <interactant intactId="EBI-10981970">
        <id>Q5T749</id>
        <label>KPRP</label>
    </interactant>
    <organismsDiffer>false</organismsDiffer>
    <experiments>3</experiments>
</comment>
<comment type="interaction">
    <interactant intactId="EBI-11017428">
        <id>Q13214-2</id>
    </interactant>
    <interactant intactId="EBI-11959885">
        <id>Q07627</id>
        <label>KRTAP1-1</label>
    </interactant>
    <organismsDiffer>false</organismsDiffer>
    <experiments>3</experiments>
</comment>
<comment type="interaction">
    <interactant intactId="EBI-11017428">
        <id>Q13214-2</id>
    </interactant>
    <interactant intactId="EBI-10171774">
        <id>P60410</id>
        <label>KRTAP10-8</label>
    </interactant>
    <organismsDiffer>false</organismsDiffer>
    <experiments>3</experiments>
</comment>
<comment type="interaction">
    <interactant intactId="EBI-11017428">
        <id>Q13214-2</id>
    </interactant>
    <interactant intactId="EBI-10172052">
        <id>P60411</id>
        <label>KRTAP10-9</label>
    </interactant>
    <organismsDiffer>false</organismsDiffer>
    <experiments>3</experiments>
</comment>
<comment type="interaction">
    <interactant intactId="EBI-11017428">
        <id>Q13214-2</id>
    </interactant>
    <interactant intactId="EBI-10176379">
        <id>P59991</id>
        <label>KRTAP12-2</label>
    </interactant>
    <organismsDiffer>false</organismsDiffer>
    <experiments>3</experiments>
</comment>
<comment type="interaction">
    <interactant intactId="EBI-11017428">
        <id>Q13214-2</id>
    </interactant>
    <interactant intactId="EBI-1048945">
        <id>Q3LI72</id>
        <label>KRTAP19-5</label>
    </interactant>
    <organismsDiffer>false</organismsDiffer>
    <experiments>3</experiments>
</comment>
<comment type="interaction">
    <interactant intactId="EBI-11017428">
        <id>Q13214-2</id>
    </interactant>
    <interactant intactId="EBI-3958099">
        <id>P26371</id>
        <label>KRTAP5-9</label>
    </interactant>
    <organismsDiffer>false</organismsDiffer>
    <experiments>3</experiments>
</comment>
<comment type="interaction">
    <interactant intactId="EBI-11017428">
        <id>Q13214-2</id>
    </interactant>
    <interactant intactId="EBI-724076">
        <id>Q99750</id>
        <label>MDFI</label>
    </interactant>
    <organismsDiffer>false</organismsDiffer>
    <experiments>3</experiments>
</comment>
<comment type="interaction">
    <interactant intactId="EBI-11017428">
        <id>Q13214-2</id>
    </interactant>
    <interactant intactId="EBI-747693">
        <id>P41227</id>
        <label>NAA10</label>
    </interactant>
    <organismsDiffer>false</organismsDiffer>
    <experiments>3</experiments>
</comment>
<comment type="interaction">
    <interactant intactId="EBI-11017428">
        <id>Q13214-2</id>
    </interactant>
    <interactant intactId="EBI-22310682">
        <id>P0DPK4</id>
        <label>NOTCH2NLC</label>
    </interactant>
    <organismsDiffer>false</organismsDiffer>
    <experiments>3</experiments>
</comment>
<comment type="interaction">
    <interactant intactId="EBI-11017428">
        <id>Q13214-2</id>
    </interactant>
    <interactant intactId="EBI-79165">
        <id>Q9NRD5</id>
        <label>PICK1</label>
    </interactant>
    <organismsDiffer>false</organismsDiffer>
    <experiments>3</experiments>
</comment>
<comment type="interaction">
    <interactant intactId="EBI-11017428">
        <id>Q13214-2</id>
    </interactant>
    <interactant intactId="EBI-11987469">
        <id>Q6ZRY4</id>
        <label>RBPMS2</label>
    </interactant>
    <organismsDiffer>false</organismsDiffer>
    <experiments>3</experiments>
</comment>
<comment type="interaction">
    <interactant intactId="EBI-11017428">
        <id>Q13214-2</id>
    </interactant>
    <interactant intactId="EBI-358993">
        <id>Q15645</id>
        <label>TRIP13</label>
    </interactant>
    <organismsDiffer>false</organismsDiffer>
    <experiments>3</experiments>
</comment>
<comment type="subcellular location">
    <subcellularLocation>
        <location evidence="1">Secreted</location>
    </subcellularLocation>
    <subcellularLocation>
        <location>Endoplasmic reticulum</location>
    </subcellularLocation>
    <text>Accumulates in the endoplasmic reticulum.</text>
</comment>
<comment type="alternative products">
    <event type="alternative splicing"/>
    <isoform>
        <id>Q13214-1</id>
        <name>1</name>
        <sequence type="displayed"/>
    </isoform>
    <isoform>
        <id>Q13214-2</id>
        <name>2</name>
        <sequence type="described" ref="VSP_023032"/>
    </isoform>
</comment>
<comment type="tissue specificity">
    <text>Expressed abundantly but differentially in a variety of neural and nonneural tissues.</text>
</comment>
<comment type="similarity">
    <text evidence="7">Belongs to the semaphorin family.</text>
</comment>
<comment type="sequence caution" evidence="7">
    <conflict type="erroneous gene model prediction">
        <sequence resource="EMBL-CDS" id="AAC02731"/>
    </conflict>
</comment>
<comment type="online information" name="Atlas of Genetics and Cytogenetics in Oncology and Haematology">
    <link uri="https://atlasgeneticsoncology.org/gene/42252/SEMA3B"/>
</comment>
<evidence type="ECO:0000250" key="1"/>
<evidence type="ECO:0000255" key="2"/>
<evidence type="ECO:0000255" key="3">
    <source>
        <dbReference type="PROSITE-ProRule" id="PRU00352"/>
    </source>
</evidence>
<evidence type="ECO:0000256" key="4">
    <source>
        <dbReference type="SAM" id="MobiDB-lite"/>
    </source>
</evidence>
<evidence type="ECO:0000269" key="5">
    <source>
    </source>
</evidence>
<evidence type="ECO:0000303" key="6">
    <source>
    </source>
</evidence>
<evidence type="ECO:0000305" key="7"/>
<protein>
    <recommendedName>
        <fullName>Semaphorin-3B</fullName>
    </recommendedName>
    <alternativeName>
        <fullName>Sema A(V)</fullName>
    </alternativeName>
    <alternativeName>
        <fullName>Semaphorin-V</fullName>
        <shortName>Sema V</shortName>
    </alternativeName>
</protein>
<reference key="1">
    <citation type="journal article" date="1996" name="Proc. Natl. Acad. Sci. U.S.A.">
        <title>Human semaphorins A(V) and IV reside in the 3p21.3 small cell lung cancer deletion region and demonstrate distinct expression patterns.</title>
        <authorList>
            <person name="Sekido Y."/>
            <person name="Bader S."/>
            <person name="Latif F."/>
            <person name="Chen J.-Y."/>
            <person name="Duh F.-M."/>
            <person name="Wei M.-H."/>
            <person name="Albanesi J.P."/>
            <person name="Lee C.-C."/>
            <person name="Lerman M.I."/>
            <person name="Minna J.D."/>
        </authorList>
    </citation>
    <scope>NUCLEOTIDE SEQUENCE [MRNA] (ISOFORM 1)</scope>
</reference>
<reference key="2">
    <citation type="submission" date="2002-04" db="EMBL/GenBank/DDBJ databases">
        <title>Semaphorin 3B (SEMA3B) cDNA.</title>
        <authorList>
            <person name="Koyama N."/>
        </authorList>
    </citation>
    <scope>NUCLEOTIDE SEQUENCE [MRNA] (ISOFORM 1)</scope>
</reference>
<reference key="3">
    <citation type="journal article" date="2006" name="Nature">
        <title>The DNA sequence, annotation and analysis of human chromosome 3.</title>
        <authorList>
            <person name="Muzny D.M."/>
            <person name="Scherer S.E."/>
            <person name="Kaul R."/>
            <person name="Wang J."/>
            <person name="Yu J."/>
            <person name="Sudbrak R."/>
            <person name="Buhay C.J."/>
            <person name="Chen R."/>
            <person name="Cree A."/>
            <person name="Ding Y."/>
            <person name="Dugan-Rocha S."/>
            <person name="Gill R."/>
            <person name="Gunaratne P."/>
            <person name="Harris R.A."/>
            <person name="Hawes A.C."/>
            <person name="Hernandez J."/>
            <person name="Hodgson A.V."/>
            <person name="Hume J."/>
            <person name="Jackson A."/>
            <person name="Khan Z.M."/>
            <person name="Kovar-Smith C."/>
            <person name="Lewis L.R."/>
            <person name="Lozado R.J."/>
            <person name="Metzker M.L."/>
            <person name="Milosavljevic A."/>
            <person name="Miner G.R."/>
            <person name="Morgan M.B."/>
            <person name="Nazareth L.V."/>
            <person name="Scott G."/>
            <person name="Sodergren E."/>
            <person name="Song X.-Z."/>
            <person name="Steffen D."/>
            <person name="Wei S."/>
            <person name="Wheeler D.A."/>
            <person name="Wright M.W."/>
            <person name="Worley K.C."/>
            <person name="Yuan Y."/>
            <person name="Zhang Z."/>
            <person name="Adams C.Q."/>
            <person name="Ansari-Lari M.A."/>
            <person name="Ayele M."/>
            <person name="Brown M.J."/>
            <person name="Chen G."/>
            <person name="Chen Z."/>
            <person name="Clendenning J."/>
            <person name="Clerc-Blankenburg K.P."/>
            <person name="Chen R."/>
            <person name="Chen Z."/>
            <person name="Davis C."/>
            <person name="Delgado O."/>
            <person name="Dinh H.H."/>
            <person name="Dong W."/>
            <person name="Draper H."/>
            <person name="Ernst S."/>
            <person name="Fu G."/>
            <person name="Gonzalez-Garay M.L."/>
            <person name="Garcia D.K."/>
            <person name="Gillett W."/>
            <person name="Gu J."/>
            <person name="Hao B."/>
            <person name="Haugen E."/>
            <person name="Havlak P."/>
            <person name="He X."/>
            <person name="Hennig S."/>
            <person name="Hu S."/>
            <person name="Huang W."/>
            <person name="Jackson L.R."/>
            <person name="Jacob L.S."/>
            <person name="Kelly S.H."/>
            <person name="Kube M."/>
            <person name="Levy R."/>
            <person name="Li Z."/>
            <person name="Liu B."/>
            <person name="Liu J."/>
            <person name="Liu W."/>
            <person name="Lu J."/>
            <person name="Maheshwari M."/>
            <person name="Nguyen B.-V."/>
            <person name="Okwuonu G.O."/>
            <person name="Palmeiri A."/>
            <person name="Pasternak S."/>
            <person name="Perez L.M."/>
            <person name="Phelps K.A."/>
            <person name="Plopper F.J."/>
            <person name="Qiang B."/>
            <person name="Raymond C."/>
            <person name="Rodriguez R."/>
            <person name="Saenphimmachak C."/>
            <person name="Santibanez J."/>
            <person name="Shen H."/>
            <person name="Shen Y."/>
            <person name="Subramanian S."/>
            <person name="Tabor P.E."/>
            <person name="Verduzco D."/>
            <person name="Waldron L."/>
            <person name="Wang J."/>
            <person name="Wang J."/>
            <person name="Wang Q."/>
            <person name="Williams G.A."/>
            <person name="Wong G.K.-S."/>
            <person name="Yao Z."/>
            <person name="Zhang J."/>
            <person name="Zhang X."/>
            <person name="Zhao G."/>
            <person name="Zhou J."/>
            <person name="Zhou Y."/>
            <person name="Nelson D."/>
            <person name="Lehrach H."/>
            <person name="Reinhardt R."/>
            <person name="Naylor S.L."/>
            <person name="Yang H."/>
            <person name="Olson M."/>
            <person name="Weinstock G."/>
            <person name="Gibbs R.A."/>
        </authorList>
    </citation>
    <scope>NUCLEOTIDE SEQUENCE [LARGE SCALE GENOMIC DNA]</scope>
</reference>
<reference key="4">
    <citation type="journal article" date="2004" name="Genome Res.">
        <title>The status, quality, and expansion of the NIH full-length cDNA project: the Mammalian Gene Collection (MGC).</title>
        <authorList>
            <consortium name="The MGC Project Team"/>
        </authorList>
    </citation>
    <scope>NUCLEOTIDE SEQUENCE [LARGE SCALE MRNA] (ISOFORM 2)</scope>
    <source>
        <tissue>Brain</tissue>
        <tissue>Muscle</tissue>
    </source>
</reference>
<reference key="5">
    <citation type="journal article" date="2000" name="Cancer Res.">
        <title>The 630-kb lung cancer homozygous deletion region on human chromosome 3p21.3: identification and evaluation of the resident candidate tumor suppressor genes.</title>
        <authorList>
            <consortium name="The international lung cancer chromosome 3p21.3 tumor suppressor gene consortium"/>
            <person name="Lerman M.I."/>
            <person name="Minna J.D."/>
        </authorList>
    </citation>
    <scope>DISCUSSION OF SEQUENCE</scope>
    <scope>VARIANTS CYS-348; HIS-397 AND ILE-415</scope>
</reference>
<name>SEM3B_HUMAN</name>